<feature type="chain" id="PRO_0000332908" description="Cysteine--tRNA ligase">
    <location>
        <begin position="1"/>
        <end position="466"/>
    </location>
</feature>
<feature type="short sequence motif" description="'HIGH' region">
    <location>
        <begin position="35"/>
        <end position="45"/>
    </location>
</feature>
<feature type="short sequence motif" description="'KMSKS' region">
    <location>
        <begin position="279"/>
        <end position="283"/>
    </location>
</feature>
<feature type="binding site" evidence="1">
    <location>
        <position position="33"/>
    </location>
    <ligand>
        <name>Zn(2+)</name>
        <dbReference type="ChEBI" id="CHEBI:29105"/>
    </ligand>
</feature>
<feature type="binding site" evidence="1">
    <location>
        <position position="221"/>
    </location>
    <ligand>
        <name>Zn(2+)</name>
        <dbReference type="ChEBI" id="CHEBI:29105"/>
    </ligand>
</feature>
<feature type="binding site" evidence="1">
    <location>
        <position position="246"/>
    </location>
    <ligand>
        <name>Zn(2+)</name>
        <dbReference type="ChEBI" id="CHEBI:29105"/>
    </ligand>
</feature>
<feature type="binding site" evidence="1">
    <location>
        <position position="250"/>
    </location>
    <ligand>
        <name>Zn(2+)</name>
        <dbReference type="ChEBI" id="CHEBI:29105"/>
    </ligand>
</feature>
<feature type="binding site" evidence="1">
    <location>
        <position position="282"/>
    </location>
    <ligand>
        <name>ATP</name>
        <dbReference type="ChEBI" id="CHEBI:30616"/>
    </ligand>
</feature>
<dbReference type="EC" id="6.1.1.16" evidence="1"/>
<dbReference type="EMBL" id="CP000738">
    <property type="protein sequence ID" value="ABR59569.1"/>
    <property type="molecule type" value="Genomic_DNA"/>
</dbReference>
<dbReference type="RefSeq" id="WP_011974914.1">
    <property type="nucleotide sequence ID" value="NC_009636.1"/>
</dbReference>
<dbReference type="RefSeq" id="YP_001326404.1">
    <property type="nucleotide sequence ID" value="NC_009636.1"/>
</dbReference>
<dbReference type="SMR" id="A6U7D9"/>
<dbReference type="STRING" id="366394.Smed_0713"/>
<dbReference type="GeneID" id="61609989"/>
<dbReference type="KEGG" id="smd:Smed_0713"/>
<dbReference type="PATRIC" id="fig|366394.8.peg.3818"/>
<dbReference type="eggNOG" id="COG0215">
    <property type="taxonomic scope" value="Bacteria"/>
</dbReference>
<dbReference type="HOGENOM" id="CLU_013528_0_1_5"/>
<dbReference type="OrthoDB" id="9815130at2"/>
<dbReference type="Proteomes" id="UP000001108">
    <property type="component" value="Chromosome"/>
</dbReference>
<dbReference type="GO" id="GO:0005829">
    <property type="term" value="C:cytosol"/>
    <property type="evidence" value="ECO:0007669"/>
    <property type="project" value="TreeGrafter"/>
</dbReference>
<dbReference type="GO" id="GO:0005524">
    <property type="term" value="F:ATP binding"/>
    <property type="evidence" value="ECO:0007669"/>
    <property type="project" value="UniProtKB-UniRule"/>
</dbReference>
<dbReference type="GO" id="GO:0004817">
    <property type="term" value="F:cysteine-tRNA ligase activity"/>
    <property type="evidence" value="ECO:0007669"/>
    <property type="project" value="UniProtKB-UniRule"/>
</dbReference>
<dbReference type="GO" id="GO:0008270">
    <property type="term" value="F:zinc ion binding"/>
    <property type="evidence" value="ECO:0007669"/>
    <property type="project" value="UniProtKB-UniRule"/>
</dbReference>
<dbReference type="GO" id="GO:0006423">
    <property type="term" value="P:cysteinyl-tRNA aminoacylation"/>
    <property type="evidence" value="ECO:0007669"/>
    <property type="project" value="UniProtKB-UniRule"/>
</dbReference>
<dbReference type="CDD" id="cd00672">
    <property type="entry name" value="CysRS_core"/>
    <property type="match status" value="1"/>
</dbReference>
<dbReference type="FunFam" id="3.40.50.620:FF:000068">
    <property type="entry name" value="Cysteine--tRNA ligase"/>
    <property type="match status" value="1"/>
</dbReference>
<dbReference type="Gene3D" id="3.40.50.620">
    <property type="entry name" value="HUPs"/>
    <property type="match status" value="1"/>
</dbReference>
<dbReference type="HAMAP" id="MF_00041">
    <property type="entry name" value="Cys_tRNA_synth"/>
    <property type="match status" value="1"/>
</dbReference>
<dbReference type="InterPro" id="IPR015803">
    <property type="entry name" value="Cys-tRNA-ligase"/>
</dbReference>
<dbReference type="InterPro" id="IPR024909">
    <property type="entry name" value="Cys-tRNA/MSH_ligase"/>
</dbReference>
<dbReference type="InterPro" id="IPR014729">
    <property type="entry name" value="Rossmann-like_a/b/a_fold"/>
</dbReference>
<dbReference type="InterPro" id="IPR032678">
    <property type="entry name" value="tRNA-synt_1_cat_dom"/>
</dbReference>
<dbReference type="InterPro" id="IPR009080">
    <property type="entry name" value="tRNAsynth_Ia_anticodon-bd"/>
</dbReference>
<dbReference type="NCBIfam" id="TIGR00435">
    <property type="entry name" value="cysS"/>
    <property type="match status" value="1"/>
</dbReference>
<dbReference type="PANTHER" id="PTHR10890:SF3">
    <property type="entry name" value="CYSTEINE--TRNA LIGASE, CYTOPLASMIC"/>
    <property type="match status" value="1"/>
</dbReference>
<dbReference type="PANTHER" id="PTHR10890">
    <property type="entry name" value="CYSTEINYL-TRNA SYNTHETASE"/>
    <property type="match status" value="1"/>
</dbReference>
<dbReference type="Pfam" id="PF01406">
    <property type="entry name" value="tRNA-synt_1e"/>
    <property type="match status" value="1"/>
</dbReference>
<dbReference type="PRINTS" id="PR00983">
    <property type="entry name" value="TRNASYNTHCYS"/>
</dbReference>
<dbReference type="SUPFAM" id="SSF47323">
    <property type="entry name" value="Anticodon-binding domain of a subclass of class I aminoacyl-tRNA synthetases"/>
    <property type="match status" value="1"/>
</dbReference>
<dbReference type="SUPFAM" id="SSF52374">
    <property type="entry name" value="Nucleotidylyl transferase"/>
    <property type="match status" value="1"/>
</dbReference>
<accession>A6U7D9</accession>
<sequence length="466" mass="51992">MGGMTVLKLYNTLTREKTDFRPIDPKNVRMYVCGPTVYDFAHIGNARPIIVFDVLFRLLRHVYGTDHVTYARNITDVDDKINARALRDYPGLPLNEAIRHVTERTETRFLEDAALLGCLDPTVQPRATENIPGMIEIIETLIAKGHAYEAEGEVLFDTRSMAEYGQLSKRNLDEQQAGARVAVEAHKRNPGDFVLWKLSAGHEPGWESPWGRGRPGWHIECSAMSGRYLGEVFDIHGGGIDLIFPHHENEIAQSRCAHGTAVMANVWMHNGFLQVEGRKMSKSEGNFITIYDLLHTEKFGGRKWPGEVLRLAMLMTHYREPIDFSIKRLEEAEHLLSKWPVHGSASGEADPAVVAALTDDLNTVAAIQALHALAQKATADARHLGAFAASAALLGVEPKEIELDEAVVQEIDGRVRERLELLKSKNYAEADGIRADLLARGIQLKDGKDPETGERVTTWEVKRSQV</sequence>
<proteinExistence type="inferred from homology"/>
<comment type="catalytic activity">
    <reaction evidence="1">
        <text>tRNA(Cys) + L-cysteine + ATP = L-cysteinyl-tRNA(Cys) + AMP + diphosphate</text>
        <dbReference type="Rhea" id="RHEA:17773"/>
        <dbReference type="Rhea" id="RHEA-COMP:9661"/>
        <dbReference type="Rhea" id="RHEA-COMP:9679"/>
        <dbReference type="ChEBI" id="CHEBI:30616"/>
        <dbReference type="ChEBI" id="CHEBI:33019"/>
        <dbReference type="ChEBI" id="CHEBI:35235"/>
        <dbReference type="ChEBI" id="CHEBI:78442"/>
        <dbReference type="ChEBI" id="CHEBI:78517"/>
        <dbReference type="ChEBI" id="CHEBI:456215"/>
        <dbReference type="EC" id="6.1.1.16"/>
    </reaction>
</comment>
<comment type="cofactor">
    <cofactor evidence="1">
        <name>Zn(2+)</name>
        <dbReference type="ChEBI" id="CHEBI:29105"/>
    </cofactor>
    <text evidence="1">Binds 1 zinc ion per subunit.</text>
</comment>
<comment type="subunit">
    <text evidence="1">Monomer.</text>
</comment>
<comment type="subcellular location">
    <subcellularLocation>
        <location evidence="1">Cytoplasm</location>
    </subcellularLocation>
</comment>
<comment type="similarity">
    <text evidence="1">Belongs to the class-I aminoacyl-tRNA synthetase family.</text>
</comment>
<organism>
    <name type="scientific">Sinorhizobium medicae (strain WSM419)</name>
    <name type="common">Ensifer medicae</name>
    <dbReference type="NCBI Taxonomy" id="366394"/>
    <lineage>
        <taxon>Bacteria</taxon>
        <taxon>Pseudomonadati</taxon>
        <taxon>Pseudomonadota</taxon>
        <taxon>Alphaproteobacteria</taxon>
        <taxon>Hyphomicrobiales</taxon>
        <taxon>Rhizobiaceae</taxon>
        <taxon>Sinorhizobium/Ensifer group</taxon>
        <taxon>Sinorhizobium</taxon>
    </lineage>
</organism>
<name>SYC_SINMW</name>
<evidence type="ECO:0000255" key="1">
    <source>
        <dbReference type="HAMAP-Rule" id="MF_00041"/>
    </source>
</evidence>
<protein>
    <recommendedName>
        <fullName evidence="1">Cysteine--tRNA ligase</fullName>
        <ecNumber evidence="1">6.1.1.16</ecNumber>
    </recommendedName>
    <alternativeName>
        <fullName evidence="1">Cysteinyl-tRNA synthetase</fullName>
        <shortName evidence="1">CysRS</shortName>
    </alternativeName>
</protein>
<keyword id="KW-0030">Aminoacyl-tRNA synthetase</keyword>
<keyword id="KW-0067">ATP-binding</keyword>
<keyword id="KW-0963">Cytoplasm</keyword>
<keyword id="KW-0436">Ligase</keyword>
<keyword id="KW-0479">Metal-binding</keyword>
<keyword id="KW-0547">Nucleotide-binding</keyword>
<keyword id="KW-0648">Protein biosynthesis</keyword>
<keyword id="KW-0862">Zinc</keyword>
<gene>
    <name evidence="1" type="primary">cysS</name>
    <name type="ordered locus">Smed_0713</name>
</gene>
<reference key="1">
    <citation type="submission" date="2007-06" db="EMBL/GenBank/DDBJ databases">
        <title>Complete sequence of Sinorhizobium medicae WSM419 chromosome.</title>
        <authorList>
            <consortium name="US DOE Joint Genome Institute"/>
            <person name="Copeland A."/>
            <person name="Lucas S."/>
            <person name="Lapidus A."/>
            <person name="Barry K."/>
            <person name="Glavina del Rio T."/>
            <person name="Dalin E."/>
            <person name="Tice H."/>
            <person name="Pitluck S."/>
            <person name="Chain P."/>
            <person name="Malfatti S."/>
            <person name="Shin M."/>
            <person name="Vergez L."/>
            <person name="Schmutz J."/>
            <person name="Larimer F."/>
            <person name="Land M."/>
            <person name="Hauser L."/>
            <person name="Kyrpides N."/>
            <person name="Mikhailova N."/>
            <person name="Reeve W.G."/>
            <person name="Richardson P."/>
        </authorList>
    </citation>
    <scope>NUCLEOTIDE SEQUENCE [LARGE SCALE GENOMIC DNA]</scope>
    <source>
        <strain>WSM419</strain>
    </source>
</reference>